<feature type="chain" id="PRO_0000108060" description="6-phosphogluconate phosphatase">
    <location>
        <begin position="1"/>
        <end position="221"/>
    </location>
</feature>
<feature type="active site" description="Nucleophile" evidence="1">
    <location>
        <position position="10"/>
    </location>
</feature>
<feature type="binding site" evidence="1">
    <location>
        <begin position="10"/>
        <end position="12"/>
    </location>
    <ligand>
        <name>substrate</name>
    </ligand>
</feature>
<feature type="binding site" evidence="1">
    <location>
        <position position="10"/>
    </location>
    <ligand>
        <name>Mg(2+)</name>
        <dbReference type="ChEBI" id="CHEBI:18420"/>
    </ligand>
</feature>
<feature type="binding site" evidence="1">
    <location>
        <position position="12"/>
    </location>
    <ligand>
        <name>Mg(2+)</name>
        <dbReference type="ChEBI" id="CHEBI:18420"/>
    </ligand>
</feature>
<feature type="binding site" evidence="1">
    <location>
        <position position="167"/>
    </location>
    <ligand>
        <name>Mg(2+)</name>
        <dbReference type="ChEBI" id="CHEBI:18420"/>
    </ligand>
</feature>
<dbReference type="EC" id="3.1.3.-"/>
<dbReference type="EMBL" id="L10328">
    <property type="protein sequence ID" value="AAA62066.1"/>
    <property type="molecule type" value="Genomic_DNA"/>
</dbReference>
<dbReference type="EMBL" id="U00096">
    <property type="protein sequence ID" value="AAC76738.1"/>
    <property type="molecule type" value="Genomic_DNA"/>
</dbReference>
<dbReference type="EMBL" id="AP009048">
    <property type="protein sequence ID" value="BAE77573.1"/>
    <property type="molecule type" value="Genomic_DNA"/>
</dbReference>
<dbReference type="PIR" id="D65174">
    <property type="entry name" value="D65174"/>
</dbReference>
<dbReference type="RefSeq" id="NP_418171.1">
    <property type="nucleotide sequence ID" value="NC_000913.3"/>
</dbReference>
<dbReference type="RefSeq" id="WP_000086486.1">
    <property type="nucleotide sequence ID" value="NZ_SSZK01000035.1"/>
</dbReference>
<dbReference type="SMR" id="P31467"/>
<dbReference type="BioGRID" id="4263102">
    <property type="interactions" value="8"/>
</dbReference>
<dbReference type="FunCoup" id="P31467">
    <property type="interactions" value="1"/>
</dbReference>
<dbReference type="STRING" id="511145.b3715"/>
<dbReference type="PaxDb" id="511145-b3715"/>
<dbReference type="DNASU" id="948232"/>
<dbReference type="EnsemblBacteria" id="AAC76738">
    <property type="protein sequence ID" value="AAC76738"/>
    <property type="gene ID" value="b3715"/>
</dbReference>
<dbReference type="GeneID" id="948232"/>
<dbReference type="KEGG" id="ecj:JW3693"/>
<dbReference type="KEGG" id="eco:b3715"/>
<dbReference type="KEGG" id="ecoc:C3026_20140"/>
<dbReference type="PATRIC" id="fig|1411691.4.peg.2986"/>
<dbReference type="EchoBASE" id="EB1676"/>
<dbReference type="eggNOG" id="COG0637">
    <property type="taxonomic scope" value="Bacteria"/>
</dbReference>
<dbReference type="HOGENOM" id="CLU_045011_13_2_6"/>
<dbReference type="InParanoid" id="P31467"/>
<dbReference type="OMA" id="FEACADI"/>
<dbReference type="OrthoDB" id="9800058at2"/>
<dbReference type="PhylomeDB" id="P31467"/>
<dbReference type="BioCyc" id="EcoCyc:EG11725-MONOMER"/>
<dbReference type="BioCyc" id="MetaCyc:EG11725-MONOMER"/>
<dbReference type="PRO" id="PR:P31467"/>
<dbReference type="Proteomes" id="UP000000625">
    <property type="component" value="Chromosome"/>
</dbReference>
<dbReference type="GO" id="GO:0000287">
    <property type="term" value="F:magnesium ion binding"/>
    <property type="evidence" value="ECO:0000314"/>
    <property type="project" value="UniProtKB"/>
</dbReference>
<dbReference type="GO" id="GO:0030145">
    <property type="term" value="F:manganese ion binding"/>
    <property type="evidence" value="ECO:0000314"/>
    <property type="project" value="UniProtKB"/>
</dbReference>
<dbReference type="GO" id="GO:0016791">
    <property type="term" value="F:phosphatase activity"/>
    <property type="evidence" value="ECO:0000314"/>
    <property type="project" value="UniProtKB"/>
</dbReference>
<dbReference type="CDD" id="cd07526">
    <property type="entry name" value="HAD_BPGM_like"/>
    <property type="match status" value="1"/>
</dbReference>
<dbReference type="Gene3D" id="3.40.50.1000">
    <property type="entry name" value="HAD superfamily/HAD-like"/>
    <property type="match status" value="1"/>
</dbReference>
<dbReference type="Gene3D" id="1.10.150.240">
    <property type="entry name" value="Putative phosphatase, domain 2"/>
    <property type="match status" value="1"/>
</dbReference>
<dbReference type="InterPro" id="IPR051600">
    <property type="entry name" value="Beta-PGM-like"/>
</dbReference>
<dbReference type="InterPro" id="IPR036412">
    <property type="entry name" value="HAD-like_sf"/>
</dbReference>
<dbReference type="InterPro" id="IPR006439">
    <property type="entry name" value="HAD-SF_hydro_IA"/>
</dbReference>
<dbReference type="InterPro" id="IPR023214">
    <property type="entry name" value="HAD_sf"/>
</dbReference>
<dbReference type="InterPro" id="IPR023198">
    <property type="entry name" value="PGP-like_dom2"/>
</dbReference>
<dbReference type="NCBIfam" id="TIGR01509">
    <property type="entry name" value="HAD-SF-IA-v3"/>
    <property type="match status" value="1"/>
</dbReference>
<dbReference type="NCBIfam" id="NF007854">
    <property type="entry name" value="PRK10563.1"/>
    <property type="match status" value="1"/>
</dbReference>
<dbReference type="PANTHER" id="PTHR46193">
    <property type="entry name" value="6-PHOSPHOGLUCONATE PHOSPHATASE"/>
    <property type="match status" value="1"/>
</dbReference>
<dbReference type="PANTHER" id="PTHR46193:SF10">
    <property type="entry name" value="6-PHOSPHOGLUCONATE PHOSPHATASE"/>
    <property type="match status" value="1"/>
</dbReference>
<dbReference type="Pfam" id="PF00702">
    <property type="entry name" value="Hydrolase"/>
    <property type="match status" value="1"/>
</dbReference>
<dbReference type="PRINTS" id="PR00413">
    <property type="entry name" value="HADHALOGNASE"/>
</dbReference>
<dbReference type="SFLD" id="SFLDG01129">
    <property type="entry name" value="C1.5:_HAD__Beta-PGM__Phosphata"/>
    <property type="match status" value="1"/>
</dbReference>
<dbReference type="SFLD" id="SFLDS00003">
    <property type="entry name" value="Haloacid_Dehalogenase"/>
    <property type="match status" value="1"/>
</dbReference>
<dbReference type="SUPFAM" id="SSF56784">
    <property type="entry name" value="HAD-like"/>
    <property type="match status" value="1"/>
</dbReference>
<organism>
    <name type="scientific">Escherichia coli (strain K12)</name>
    <dbReference type="NCBI Taxonomy" id="83333"/>
    <lineage>
        <taxon>Bacteria</taxon>
        <taxon>Pseudomonadati</taxon>
        <taxon>Pseudomonadota</taxon>
        <taxon>Gammaproteobacteria</taxon>
        <taxon>Enterobacterales</taxon>
        <taxon>Enterobacteriaceae</taxon>
        <taxon>Escherichia</taxon>
    </lineage>
</organism>
<gene>
    <name type="primary">yieH</name>
    <name type="ordered locus">b3715</name>
    <name type="ordered locus">JW3693</name>
</gene>
<proteinExistence type="evidence at protein level"/>
<reference key="1">
    <citation type="journal article" date="1993" name="Genomics">
        <title>DNA sequence and analysis of 136 kilobases of the Escherichia coli genome: organizational symmetry around the origin of replication.</title>
        <authorList>
            <person name="Burland V.D."/>
            <person name="Plunkett G. III"/>
            <person name="Daniels D.L."/>
            <person name="Blattner F.R."/>
        </authorList>
    </citation>
    <scope>NUCLEOTIDE SEQUENCE [LARGE SCALE GENOMIC DNA]</scope>
    <source>
        <strain>K12 / MG1655 / ATCC 47076</strain>
    </source>
</reference>
<reference key="2">
    <citation type="journal article" date="1997" name="Science">
        <title>The complete genome sequence of Escherichia coli K-12.</title>
        <authorList>
            <person name="Blattner F.R."/>
            <person name="Plunkett G. III"/>
            <person name="Bloch C.A."/>
            <person name="Perna N.T."/>
            <person name="Burland V."/>
            <person name="Riley M."/>
            <person name="Collado-Vides J."/>
            <person name="Glasner J.D."/>
            <person name="Rode C.K."/>
            <person name="Mayhew G.F."/>
            <person name="Gregor J."/>
            <person name="Davis N.W."/>
            <person name="Kirkpatrick H.A."/>
            <person name="Goeden M.A."/>
            <person name="Rose D.J."/>
            <person name="Mau B."/>
            <person name="Shao Y."/>
        </authorList>
    </citation>
    <scope>NUCLEOTIDE SEQUENCE [LARGE SCALE GENOMIC DNA]</scope>
    <source>
        <strain>K12 / MG1655 / ATCC 47076</strain>
    </source>
</reference>
<reference key="3">
    <citation type="journal article" date="2006" name="Mol. Syst. Biol.">
        <title>Highly accurate genome sequences of Escherichia coli K-12 strains MG1655 and W3110.</title>
        <authorList>
            <person name="Hayashi K."/>
            <person name="Morooka N."/>
            <person name="Yamamoto Y."/>
            <person name="Fujita K."/>
            <person name="Isono K."/>
            <person name="Choi S."/>
            <person name="Ohtsubo E."/>
            <person name="Baba T."/>
            <person name="Wanner B.L."/>
            <person name="Mori H."/>
            <person name="Horiuchi T."/>
        </authorList>
    </citation>
    <scope>NUCLEOTIDE SEQUENCE [LARGE SCALE GENOMIC DNA]</scope>
    <source>
        <strain>K12 / W3110 / ATCC 27325 / DSM 5911</strain>
    </source>
</reference>
<reference key="4">
    <citation type="journal article" date="2005" name="FEMS Microbiol. Rev.">
        <title>Enzyme genomics: application of general enzymatic screens to discover new enzymes.</title>
        <authorList>
            <person name="Kuznetsova E."/>
            <person name="Proudfoot M."/>
            <person name="Sanders S.A."/>
            <person name="Reinking J."/>
            <person name="Savchenko A."/>
            <person name="Arrowsmith C.H."/>
            <person name="Edwards A.M."/>
            <person name="Yakunin A.F."/>
        </authorList>
    </citation>
    <scope>FUNCTION AS A PHOSPHATASE</scope>
</reference>
<reference key="5">
    <citation type="journal article" date="2006" name="J. Biol. Chem.">
        <title>Genome-wide analysis of substrate specificities of the Escherichia coli haloacid dehalogenase-like phosphatase family.</title>
        <authorList>
            <person name="Kuznetsova E."/>
            <person name="Proudfoot M."/>
            <person name="Gonzalez C.F."/>
            <person name="Brown G."/>
            <person name="Omelchenko M.V."/>
            <person name="Borozan I."/>
            <person name="Carmel L."/>
            <person name="Wolf Y.I."/>
            <person name="Mori H."/>
            <person name="Savchenko A.V."/>
            <person name="Arrowsmith C.H."/>
            <person name="Koonin E.V."/>
            <person name="Edwards A.M."/>
            <person name="Yakunin A.F."/>
        </authorList>
    </citation>
    <scope>FUNCTION AS A PHOSPHATASE</scope>
    <scope>BIOPHYSICOCHEMICAL PROPERTIES</scope>
    <scope>SUBSTRATE SPECIFICITY</scope>
    <scope>COFACTOR</scope>
</reference>
<comment type="function">
    <text evidence="2 3">Catalyzes strongly the dephosphorylation of 6-phosphogluconate (6P-Glu) and slightly the dephosphorylation of dihydroxyacetone phosphate (DHAP) and phosphoenolpyruvate (PEP). Also hydrolyzes both purines (GMP and IMP) and pyrimidines as secondary substrates.</text>
</comment>
<comment type="cofactor">
    <cofactor evidence="3">
        <name>Mg(2+)</name>
        <dbReference type="ChEBI" id="CHEBI:18420"/>
    </cofactor>
    <cofactor evidence="3">
        <name>Mn(2+)</name>
        <dbReference type="ChEBI" id="CHEBI:29035"/>
    </cofactor>
    <cofactor evidence="3">
        <name>Co(2+)</name>
        <dbReference type="ChEBI" id="CHEBI:48828"/>
    </cofactor>
    <cofactor evidence="3">
        <name>Zn(2+)</name>
        <dbReference type="ChEBI" id="CHEBI:29105"/>
    </cofactor>
    <text evidence="3">Magnesium. Can also use other divalent metal cations as manganese, cobalt or zinc.</text>
</comment>
<comment type="biophysicochemical properties">
    <kinetics>
        <KM evidence="3">2.2 mM for 6P-Glu (with magnesium ions as cofactor and at pH 9)</KM>
        <KM evidence="3">2.9 mM for PEP (with manganese ions as cofactor and at pH 9)</KM>
    </kinetics>
    <phDependence>
        <text evidence="3">Optimum pH is between 6 and 7.5.</text>
    </phDependence>
</comment>
<comment type="similarity">
    <text evidence="4">Belongs to the HAD-like hydrolase superfamily. CbbY/CbbZ/Gph/YieH family.</text>
</comment>
<keyword id="KW-0378">Hydrolase</keyword>
<keyword id="KW-0460">Magnesium</keyword>
<keyword id="KW-0464">Manganese</keyword>
<keyword id="KW-0479">Metal-binding</keyword>
<keyword id="KW-1185">Reference proteome</keyword>
<evidence type="ECO:0000250" key="1"/>
<evidence type="ECO:0000269" key="2">
    <source>
    </source>
</evidence>
<evidence type="ECO:0000269" key="3">
    <source>
    </source>
</evidence>
<evidence type="ECO:0000305" key="4"/>
<sequence>MSRIEAVFFDCDGTLVDSEVICSRAYVTMFQEFGITLDPEEVFKRFKGVKLYEIIDIVSLEHGVTLAKTEAEHVYRAEVARLFDSELEAIEGAGALLSAITAPMCVVSNGPNNKMQHSMGKLNMLHYFPDKLFSGYDIQRWKPDPALMFHAAKAMNVNVENCILVDDSVAGAQSGIDAGMEVFYFCADPHNKPIVHPKVTTFTHLSQLPELWKARGWDITA</sequence>
<accession>P31467</accession>
<accession>Q2M833</accession>
<name>YIEH_ECOLI</name>
<protein>
    <recommendedName>
        <fullName>6-phosphogluconate phosphatase</fullName>
        <ecNumber>3.1.3.-</ecNumber>
    </recommendedName>
</protein>